<dbReference type="EMBL" id="KR732613">
    <property type="protein sequence ID" value="AKZ17655.1"/>
    <property type="molecule type" value="mRNA"/>
</dbReference>
<dbReference type="RefSeq" id="XP_016905691.1">
    <property type="nucleotide sequence ID" value="XM_017050202.1"/>
</dbReference>
<dbReference type="RefSeq" id="XP_016905692.1">
    <property type="nucleotide sequence ID" value="XM_017050203.1"/>
</dbReference>
<dbReference type="RefSeq" id="XP_016905693.1">
    <property type="nucleotide sequence ID" value="XM_017050204.1"/>
</dbReference>
<dbReference type="RefSeq" id="XP_016905694.1">
    <property type="nucleotide sequence ID" value="XM_017050205.1"/>
</dbReference>
<dbReference type="RefSeq" id="XP_016905696.1">
    <property type="nucleotide sequence ID" value="XM_017050207.1"/>
</dbReference>
<dbReference type="SMR" id="A0A0K1YW63"/>
<dbReference type="KEGG" id="acer:107993666"/>
<dbReference type="GO" id="GO:0005576">
    <property type="term" value="C:extracellular region"/>
    <property type="evidence" value="ECO:0000314"/>
    <property type="project" value="UniProtKB"/>
</dbReference>
<dbReference type="GO" id="GO:0004867">
    <property type="term" value="F:serine-type endopeptidase inhibitor activity"/>
    <property type="evidence" value="ECO:0000314"/>
    <property type="project" value="UniProtKB"/>
</dbReference>
<dbReference type="GO" id="GO:0140367">
    <property type="term" value="P:antibacterial innate immune response"/>
    <property type="evidence" value="ECO:0000314"/>
    <property type="project" value="UniProtKB"/>
</dbReference>
<dbReference type="GO" id="GO:0061760">
    <property type="term" value="P:antifungal innate immune response"/>
    <property type="evidence" value="ECO:0000314"/>
    <property type="project" value="UniProtKB"/>
</dbReference>
<dbReference type="GO" id="GO:0050832">
    <property type="term" value="P:defense response to fungus"/>
    <property type="evidence" value="ECO:0000314"/>
    <property type="project" value="UniProtKB"/>
</dbReference>
<dbReference type="GO" id="GO:0050829">
    <property type="term" value="P:defense response to Gram-negative bacterium"/>
    <property type="evidence" value="ECO:0000314"/>
    <property type="project" value="UniProtKB"/>
</dbReference>
<dbReference type="GO" id="GO:0050830">
    <property type="term" value="P:defense response to Gram-positive bacterium"/>
    <property type="evidence" value="ECO:0000314"/>
    <property type="project" value="UniProtKB"/>
</dbReference>
<dbReference type="GO" id="GO:0031640">
    <property type="term" value="P:killing of cells of another organism"/>
    <property type="evidence" value="ECO:0000314"/>
    <property type="project" value="UniProtKB"/>
</dbReference>
<dbReference type="GO" id="GO:0044536">
    <property type="term" value="P:venom-mediated depletion of circulating fibrinogen"/>
    <property type="evidence" value="ECO:0000314"/>
    <property type="project" value="UniProtKB"/>
</dbReference>
<dbReference type="GO" id="GO:0140099">
    <property type="term" value="P:venom-mediated suppression of fibrinolysis in another organism"/>
    <property type="evidence" value="ECO:0000314"/>
    <property type="project" value="UniProtKB"/>
</dbReference>
<dbReference type="InterPro" id="IPR020128">
    <property type="entry name" value="Secapin"/>
</dbReference>
<dbReference type="Pfam" id="PF17521">
    <property type="entry name" value="Secapin"/>
    <property type="match status" value="1"/>
</dbReference>
<accession>A0A0K1YW63</accession>
<proteinExistence type="evidence at protein level"/>
<comment type="function">
    <text evidence="3 4 5">Serine protease inhibitor which exhibits antifibrinolytic, antielastolytic and antimicrobial activities (PubMed:27208884). Displays antimicrobial activity against bacteria and fungi (PubMed:27208884). Likely functions in the innate immune response to microbial infection and possibly in the venom, as an antifibrinolytic agent (PubMed:27208884). The recombinant form inhibits trypsin (IC(50)=80.02 nM, Ki=127.25 nM), chymotrypsin (IC(50)=393.78 nM, Ki=432.59 nM), the microbial serine proteases subtilisin A (IC(50)=379.20 nM, Ki=492.77 nM) and proteinase K (IC(50)=189.43 nM, Ki=271.76 nM), plasmin (IC(50)=457.98 nM, Ki=502.91 nM), human elastase (IC(50)=347.81 nM, Ki=469.90 nM) and porcine elastase (IC(50)=94.70 nM, Ki=125.62 nM) (PubMed:27208884). Does not inhibit thrombin (PubMed:27208884). Binds to human plasmin and inhibits the plasmin-mediated degradation of fibrin to fibrin degradation products, indicating its role as an anti-fibrinolytic agent (PubMed:27208884). Also binds to bacterial and fungal surfaces (PubMed:27208884). Exhibits antimicrobial activity against the Gram-positive bacteria B.thuringiensis (MIC=4.21 uM) and P.larvae (MIC=11.13 uM), the Gram-negative bacteria E.coli (MIC=6.50 uM) and the multidrug-resistant A.baumannii (MIC=5 ug/ml, MBC=10 ug/ml), as well as against the fungus B.bassiana (IC(50)=2.57 uM) (PubMed:27208884, PubMed:39224503). The synthetic peptide also exhibits antimicrobial activity against the Gram-positive bacterium P.larvae (MIC=41.12 uM), the Gram-negative bacterium P.aeruginosa (MIC=65.75 uM), and the fungus B.bassiana (IC(50)=44.27 uM) (Ref.2). Is also able to prevent A.baumannii biofilm formation and eliminate established A.baumannii biofilms (PubMed:39224503). In vitro, does not induce an inflammatory response and has no cytotoxic activity against mammalian cells (Ref.2, PubMed:39224503).</text>
</comment>
<comment type="biophysicochemical properties">
    <temperatureDependence>
        <text evidence="5">Antibacterial activity against P.aeruginosa is retained between 25 and 90 degrees Celsius.</text>
    </temperatureDependence>
</comment>
<comment type="subcellular location">
    <subcellularLocation>
        <location evidence="8">Secreted</location>
    </subcellularLocation>
</comment>
<comment type="tissue specificity">
    <text evidence="3">Expressed in the epidermis, fat body and venom gland.</text>
</comment>
<comment type="induction">
    <text evidence="3">Up-regulated in the fat body after injection with bacteria (B.thuringiensis, P.larvae or E.coli) or the fungus B.bassiana.</text>
</comment>
<comment type="similarity">
    <text evidence="7">Belongs to the secapin family.</text>
</comment>
<organism>
    <name type="scientific">Apis cerana</name>
    <name type="common">Indian honeybee</name>
    <dbReference type="NCBI Taxonomy" id="7461"/>
    <lineage>
        <taxon>Eukaryota</taxon>
        <taxon>Metazoa</taxon>
        <taxon>Ecdysozoa</taxon>
        <taxon>Arthropoda</taxon>
        <taxon>Hexapoda</taxon>
        <taxon>Insecta</taxon>
        <taxon>Pterygota</taxon>
        <taxon>Neoptera</taxon>
        <taxon>Endopterygota</taxon>
        <taxon>Hymenoptera</taxon>
        <taxon>Apocrita</taxon>
        <taxon>Aculeata</taxon>
        <taxon>Apoidea</taxon>
        <taxon>Anthophila</taxon>
        <taxon>Apidae</taxon>
        <taxon>Apis</taxon>
    </lineage>
</organism>
<reference evidence="9" key="1">
    <citation type="journal article" date="2016" name="Dev. Comp. Immunol.">
        <title>Secapin, a bee venom peptide, exhibits anti-fibrinolytic, anti-elastolytic, and anti-microbial activities.</title>
        <authorList>
            <person name="Lee K.S."/>
            <person name="Kim B.Y."/>
            <person name="Yoon H.J."/>
            <person name="Choi Y.S."/>
            <person name="Jin B.R."/>
        </authorList>
    </citation>
    <scope>NUCLEOTIDE SEQUENCE [MRNA]</scope>
    <scope>FUNCTION</scope>
    <scope>SUBCELLULAR LOCATION</scope>
    <scope>TISSUE SPECIFICITY</scope>
    <scope>INDUCTION</scope>
</reference>
<reference key="2">
    <citation type="journal article" date="2017" name="J. Asia-Pac. Entomol.">
        <title>Synthetic secapin bee venom peptide exerts an anti-microbial effect but not a cytotoxic or inflammatory response.</title>
        <authorList>
            <person name="Kim B.Y."/>
            <person name="Lee K.S."/>
            <person name="Ok M."/>
            <person name="Jin B.R."/>
        </authorList>
    </citation>
    <scope>SYNTHESIS OF 91-115</scope>
    <scope>FUNCTION</scope>
    <scope>BIOPHYSICOCHEMICAL PROPERTIES</scope>
</reference>
<reference key="3">
    <citation type="journal article" date="2024" name="GMS Hyg. Infect. Control">
        <title>Secapin: a promising antimicrobial peptide against multidrug-resistant Acinetobacter baumannii.</title>
        <authorList>
            <person name="Sadeghi Rad Z."/>
            <person name="Farahmand M."/>
            <person name="Kavousi M."/>
        </authorList>
    </citation>
    <scope>FUNCTION</scope>
</reference>
<protein>
    <recommendedName>
        <fullName evidence="6">Secapin</fullName>
    </recommendedName>
    <alternativeName>
        <fullName evidence="6">AcSecapin-1</fullName>
    </alternativeName>
    <alternativeName>
        <fullName evidence="7">Secapin-1</fullName>
    </alternativeName>
</protein>
<evidence type="ECO:0000250" key="1">
    <source>
        <dbReference type="UniProtKB" id="P02852"/>
    </source>
</evidence>
<evidence type="ECO:0000255" key="2"/>
<evidence type="ECO:0000269" key="3">
    <source>
    </source>
</evidence>
<evidence type="ECO:0000269" key="4">
    <source>
    </source>
</evidence>
<evidence type="ECO:0000269" key="5">
    <source ref="2"/>
</evidence>
<evidence type="ECO:0000303" key="6">
    <source>
    </source>
</evidence>
<evidence type="ECO:0000305" key="7"/>
<evidence type="ECO:0000305" key="8">
    <source>
    </source>
</evidence>
<evidence type="ECO:0000312" key="9">
    <source>
        <dbReference type="EMBL" id="AKZ17655.1"/>
    </source>
</evidence>
<feature type="signal peptide" evidence="2">
    <location>
        <begin position="1"/>
        <end position="24"/>
    </location>
</feature>
<feature type="propeptide" id="PRO_0000453147" evidence="7">
    <location>
        <begin position="25"/>
        <end position="90"/>
    </location>
</feature>
<feature type="peptide" id="PRO_0000453148" description="Secapin" evidence="1">
    <location>
        <begin position="91"/>
        <end position="115"/>
    </location>
</feature>
<feature type="disulfide bond" evidence="1">
    <location>
        <begin position="99"/>
        <end position="110"/>
    </location>
</feature>
<keyword id="KW-0044">Antibiotic</keyword>
<keyword id="KW-0929">Antimicrobial</keyword>
<keyword id="KW-1015">Disulfide bond</keyword>
<keyword id="KW-0295">Fungicide</keyword>
<keyword id="KW-1199">Hemostasis impairing toxin</keyword>
<keyword id="KW-0391">Immunity</keyword>
<keyword id="KW-0399">Innate immunity</keyword>
<keyword id="KW-0646">Protease inhibitor</keyword>
<keyword id="KW-0964">Secreted</keyword>
<keyword id="KW-0722">Serine protease inhibitor</keyword>
<keyword id="KW-0732">Signal</keyword>
<keyword id="KW-0800">Toxin</keyword>
<sequence length="115" mass="13570">MRFQVYILHLCFFILVVLTYLSQGQSYTTTTTTSTTEQPTFLQKIHETFKKVKENAKIHNLYIFDPPTWIYTTTTEKPVESTENFDITNRQLITVPVRCPPNYDFIKGRCREKIP</sequence>
<name>SECP_APICE</name>